<reference key="1">
    <citation type="journal article" date="2004" name="Nature">
        <title>Genome sequence of the Brown Norway rat yields insights into mammalian evolution.</title>
        <authorList>
            <person name="Gibbs R.A."/>
            <person name="Weinstock G.M."/>
            <person name="Metzker M.L."/>
            <person name="Muzny D.M."/>
            <person name="Sodergren E.J."/>
            <person name="Scherer S."/>
            <person name="Scott G."/>
            <person name="Steffen D."/>
            <person name="Worley K.C."/>
            <person name="Burch P.E."/>
            <person name="Okwuonu G."/>
            <person name="Hines S."/>
            <person name="Lewis L."/>
            <person name="Deramo C."/>
            <person name="Delgado O."/>
            <person name="Dugan-Rocha S."/>
            <person name="Miner G."/>
            <person name="Morgan M."/>
            <person name="Hawes A."/>
            <person name="Gill R."/>
            <person name="Holt R.A."/>
            <person name="Adams M.D."/>
            <person name="Amanatides P.G."/>
            <person name="Baden-Tillson H."/>
            <person name="Barnstead M."/>
            <person name="Chin S."/>
            <person name="Evans C.A."/>
            <person name="Ferriera S."/>
            <person name="Fosler C."/>
            <person name="Glodek A."/>
            <person name="Gu Z."/>
            <person name="Jennings D."/>
            <person name="Kraft C.L."/>
            <person name="Nguyen T."/>
            <person name="Pfannkoch C.M."/>
            <person name="Sitter C."/>
            <person name="Sutton G.G."/>
            <person name="Venter J.C."/>
            <person name="Woodage T."/>
            <person name="Smith D."/>
            <person name="Lee H.-M."/>
            <person name="Gustafson E."/>
            <person name="Cahill P."/>
            <person name="Kana A."/>
            <person name="Doucette-Stamm L."/>
            <person name="Weinstock K."/>
            <person name="Fechtel K."/>
            <person name="Weiss R.B."/>
            <person name="Dunn D.M."/>
            <person name="Green E.D."/>
            <person name="Blakesley R.W."/>
            <person name="Bouffard G.G."/>
            <person name="De Jong P.J."/>
            <person name="Osoegawa K."/>
            <person name="Zhu B."/>
            <person name="Marra M."/>
            <person name="Schein J."/>
            <person name="Bosdet I."/>
            <person name="Fjell C."/>
            <person name="Jones S."/>
            <person name="Krzywinski M."/>
            <person name="Mathewson C."/>
            <person name="Siddiqui A."/>
            <person name="Wye N."/>
            <person name="McPherson J."/>
            <person name="Zhao S."/>
            <person name="Fraser C.M."/>
            <person name="Shetty J."/>
            <person name="Shatsman S."/>
            <person name="Geer K."/>
            <person name="Chen Y."/>
            <person name="Abramzon S."/>
            <person name="Nierman W.C."/>
            <person name="Havlak P.H."/>
            <person name="Chen R."/>
            <person name="Durbin K.J."/>
            <person name="Egan A."/>
            <person name="Ren Y."/>
            <person name="Song X.-Z."/>
            <person name="Li B."/>
            <person name="Liu Y."/>
            <person name="Qin X."/>
            <person name="Cawley S."/>
            <person name="Cooney A.J."/>
            <person name="D'Souza L.M."/>
            <person name="Martin K."/>
            <person name="Wu J.Q."/>
            <person name="Gonzalez-Garay M.L."/>
            <person name="Jackson A.R."/>
            <person name="Kalafus K.J."/>
            <person name="McLeod M.P."/>
            <person name="Milosavljevic A."/>
            <person name="Virk D."/>
            <person name="Volkov A."/>
            <person name="Wheeler D.A."/>
            <person name="Zhang Z."/>
            <person name="Bailey J.A."/>
            <person name="Eichler E.E."/>
            <person name="Tuzun E."/>
            <person name="Birney E."/>
            <person name="Mongin E."/>
            <person name="Ureta-Vidal A."/>
            <person name="Woodwark C."/>
            <person name="Zdobnov E."/>
            <person name="Bork P."/>
            <person name="Suyama M."/>
            <person name="Torrents D."/>
            <person name="Alexandersson M."/>
            <person name="Trask B.J."/>
            <person name="Young J.M."/>
            <person name="Huang H."/>
            <person name="Wang H."/>
            <person name="Xing H."/>
            <person name="Daniels S."/>
            <person name="Gietzen D."/>
            <person name="Schmidt J."/>
            <person name="Stevens K."/>
            <person name="Vitt U."/>
            <person name="Wingrove J."/>
            <person name="Camara F."/>
            <person name="Mar Alba M."/>
            <person name="Abril J.F."/>
            <person name="Guigo R."/>
            <person name="Smit A."/>
            <person name="Dubchak I."/>
            <person name="Rubin E.M."/>
            <person name="Couronne O."/>
            <person name="Poliakov A."/>
            <person name="Huebner N."/>
            <person name="Ganten D."/>
            <person name="Goesele C."/>
            <person name="Hummel O."/>
            <person name="Kreitler T."/>
            <person name="Lee Y.-A."/>
            <person name="Monti J."/>
            <person name="Schulz H."/>
            <person name="Zimdahl H."/>
            <person name="Himmelbauer H."/>
            <person name="Lehrach H."/>
            <person name="Jacob H.J."/>
            <person name="Bromberg S."/>
            <person name="Gullings-Handley J."/>
            <person name="Jensen-Seaman M.I."/>
            <person name="Kwitek A.E."/>
            <person name="Lazar J."/>
            <person name="Pasko D."/>
            <person name="Tonellato P.J."/>
            <person name="Twigger S."/>
            <person name="Ponting C.P."/>
            <person name="Duarte J.M."/>
            <person name="Rice S."/>
            <person name="Goodstadt L."/>
            <person name="Beatson S.A."/>
            <person name="Emes R.D."/>
            <person name="Winter E.E."/>
            <person name="Webber C."/>
            <person name="Brandt P."/>
            <person name="Nyakatura G."/>
            <person name="Adetobi M."/>
            <person name="Chiaromonte F."/>
            <person name="Elnitski L."/>
            <person name="Eswara P."/>
            <person name="Hardison R.C."/>
            <person name="Hou M."/>
            <person name="Kolbe D."/>
            <person name="Makova K."/>
            <person name="Miller W."/>
            <person name="Nekrutenko A."/>
            <person name="Riemer C."/>
            <person name="Schwartz S."/>
            <person name="Taylor J."/>
            <person name="Yang S."/>
            <person name="Zhang Y."/>
            <person name="Lindpaintner K."/>
            <person name="Andrews T.D."/>
            <person name="Caccamo M."/>
            <person name="Clamp M."/>
            <person name="Clarke L."/>
            <person name="Curwen V."/>
            <person name="Durbin R.M."/>
            <person name="Eyras E."/>
            <person name="Searle S.M."/>
            <person name="Cooper G.M."/>
            <person name="Batzoglou S."/>
            <person name="Brudno M."/>
            <person name="Sidow A."/>
            <person name="Stone E.A."/>
            <person name="Payseur B.A."/>
            <person name="Bourque G."/>
            <person name="Lopez-Otin C."/>
            <person name="Puente X.S."/>
            <person name="Chakrabarti K."/>
            <person name="Chatterji S."/>
            <person name="Dewey C."/>
            <person name="Pachter L."/>
            <person name="Bray N."/>
            <person name="Yap V.B."/>
            <person name="Caspi A."/>
            <person name="Tesler G."/>
            <person name="Pevzner P.A."/>
            <person name="Haussler D."/>
            <person name="Roskin K.M."/>
            <person name="Baertsch R."/>
            <person name="Clawson H."/>
            <person name="Furey T.S."/>
            <person name="Hinrichs A.S."/>
            <person name="Karolchik D."/>
            <person name="Kent W.J."/>
            <person name="Rosenbloom K.R."/>
            <person name="Trumbower H."/>
            <person name="Weirauch M."/>
            <person name="Cooper D.N."/>
            <person name="Stenson P.D."/>
            <person name="Ma B."/>
            <person name="Brent M."/>
            <person name="Arumugam M."/>
            <person name="Shteynberg D."/>
            <person name="Copley R.R."/>
            <person name="Taylor M.S."/>
            <person name="Riethman H."/>
            <person name="Mudunuri U."/>
            <person name="Peterson J."/>
            <person name="Guyer M."/>
            <person name="Felsenfeld A."/>
            <person name="Old S."/>
            <person name="Mockrin S."/>
            <person name="Collins F.S."/>
        </authorList>
    </citation>
    <scope>NUCLEOTIDE SEQUENCE [LARGE SCALE GENOMIC DNA]</scope>
    <source>
        <strain>Brown Norway</strain>
    </source>
</reference>
<reference key="2">
    <citation type="journal article" date="2004" name="Genome Res.">
        <title>The status, quality, and expansion of the NIH full-length cDNA project: the Mammalian Gene Collection (MGC).</title>
        <authorList>
            <consortium name="The MGC Project Team"/>
        </authorList>
    </citation>
    <scope>NUCLEOTIDE SEQUENCE [LARGE SCALE MRNA] (ISOFORM 2)</scope>
    <source>
        <tissue>Liver</tissue>
    </source>
</reference>
<reference key="3">
    <citation type="journal article" date="2012" name="Nat. Commun.">
        <title>Quantitative maps of protein phosphorylation sites across 14 different rat organs and tissues.</title>
        <authorList>
            <person name="Lundby A."/>
            <person name="Secher A."/>
            <person name="Lage K."/>
            <person name="Nordsborg N.B."/>
            <person name="Dmytriyev A."/>
            <person name="Lundby C."/>
            <person name="Olsen J.V."/>
        </authorList>
    </citation>
    <scope>PHOSPHORYLATION [LARGE SCALE ANALYSIS] AT THR-113</scope>
    <scope>IDENTIFICATION BY MASS SPECTROMETRY [LARGE SCALE ANALYSIS]</scope>
</reference>
<feature type="chain" id="PRO_0000286605" description="Protein phosphatase 1H">
    <location>
        <begin position="1"/>
        <end position="513"/>
    </location>
</feature>
<feature type="domain" description="PPM-type phosphatase" evidence="3">
    <location>
        <begin position="77"/>
        <end position="506"/>
    </location>
</feature>
<feature type="region of interest" description="Disordered" evidence="4">
    <location>
        <begin position="110"/>
        <end position="133"/>
    </location>
</feature>
<feature type="modified residue" description="Phosphoserine" evidence="1">
    <location>
        <position position="7"/>
    </location>
</feature>
<feature type="modified residue" description="Phosphothreonine" evidence="7">
    <location>
        <position position="113"/>
    </location>
</feature>
<feature type="modified residue" description="Phosphoserine" evidence="2">
    <location>
        <position position="123"/>
    </location>
</feature>
<feature type="modified residue" description="Phosphoserine" evidence="2">
    <location>
        <position position="210"/>
    </location>
</feature>
<feature type="modified residue" description="Omega-N-methylarginine" evidence="1">
    <location>
        <position position="212"/>
    </location>
</feature>
<feature type="modified residue" description="Phosphoserine" evidence="2">
    <location>
        <position position="220"/>
    </location>
</feature>
<feature type="modified residue" description="Phosphothreonine" evidence="2">
    <location>
        <position position="223"/>
    </location>
</feature>
<feature type="modified residue" description="Phosphoserine" evidence="2">
    <location>
        <position position="421"/>
    </location>
</feature>
<feature type="splice variant" id="VSP_025123" description="In isoform 2." evidence="5">
    <location>
        <begin position="1"/>
        <end position="319"/>
    </location>
</feature>
<feature type="splice variant" id="VSP_025124" description="In isoform 2." evidence="5">
    <original>MQPHLLGNEFTHLEFPRRVQRKELGKKMLYRDFNMTGW</original>
    <variation>MEEFRYKYVPWSSEIQQEGGGMRATVSTRKKTASEMIR</variation>
    <location>
        <begin position="320"/>
        <end position="357"/>
    </location>
</feature>
<sequence length="513" mass="56380">MLTRVKSAVANFMGGIMAGSSGSEHGGSGCGGSDLPLRFPYGRPEFLGLSQDEVECSADHIARPILILKETRRLPWATGYAEVINAGKSTHNEDQASCEVLTVKKKVGTITSTPNRNSKRRSSLPNGEGLQLKENSESEGISCHYWSLFDGHAGSGAAVVASRLLQHHITQQLQDIVEILKNSAILPPTCLGEEPESTPAHGRTLTRAASLRGGVGAPGSPSTPPTRFFTEKKIPHECLVIGALESAFKEMDLQIERERSAYNISGGCTALIVVCLLGKLYVANAGDSRAIIIRNGEIIPMSSEFTPETERQRLQYLAFMQPHLLGNEFTHLEFPRRVQRKELGKKMLYRDFNMTGWAYKTIEDDDLKFPLIYGEGKKARVMATIGVTRGLGDHDLKVHDSNIYIKPFLSSAPEVRVYDLSKYEHGADDVLILATDGLWDVLSNEEVAEAITQFLPNCDPDDPHRYTLAAQDLVMRARGVLKDRGWRISNDRLGSGDDISVYVIPLIHGNKLS</sequence>
<evidence type="ECO:0000250" key="1">
    <source>
        <dbReference type="UniProtKB" id="Q3UYC0"/>
    </source>
</evidence>
<evidence type="ECO:0000250" key="2">
    <source>
        <dbReference type="UniProtKB" id="Q9ULR3"/>
    </source>
</evidence>
<evidence type="ECO:0000255" key="3">
    <source>
        <dbReference type="PROSITE-ProRule" id="PRU01082"/>
    </source>
</evidence>
<evidence type="ECO:0000256" key="4">
    <source>
        <dbReference type="SAM" id="MobiDB-lite"/>
    </source>
</evidence>
<evidence type="ECO:0000303" key="5">
    <source>
    </source>
</evidence>
<evidence type="ECO:0000305" key="6"/>
<evidence type="ECO:0007744" key="7">
    <source>
    </source>
</evidence>
<proteinExistence type="evidence at protein level"/>
<dbReference type="EC" id="3.1.3.16"/>
<dbReference type="EMBL" id="AABR03055580">
    <property type="status" value="NOT_ANNOTATED_CDS"/>
    <property type="molecule type" value="Genomic_DNA"/>
</dbReference>
<dbReference type="EMBL" id="AABR03055960">
    <property type="status" value="NOT_ANNOTATED_CDS"/>
    <property type="molecule type" value="Genomic_DNA"/>
</dbReference>
<dbReference type="EMBL" id="AABR03056001">
    <property type="status" value="NOT_ANNOTATED_CDS"/>
    <property type="molecule type" value="Genomic_DNA"/>
</dbReference>
<dbReference type="EMBL" id="AABR03056562">
    <property type="status" value="NOT_ANNOTATED_CDS"/>
    <property type="molecule type" value="Genomic_DNA"/>
</dbReference>
<dbReference type="EMBL" id="AABR03058099">
    <property type="status" value="NOT_ANNOTATED_CDS"/>
    <property type="molecule type" value="Genomic_DNA"/>
</dbReference>
<dbReference type="EMBL" id="AABR03058942">
    <property type="status" value="NOT_ANNOTATED_CDS"/>
    <property type="molecule type" value="Genomic_DNA"/>
</dbReference>
<dbReference type="EMBL" id="BC088307">
    <property type="protein sequence ID" value="AAH88307.1"/>
    <property type="status" value="ALT_INIT"/>
    <property type="molecule type" value="mRNA"/>
</dbReference>
<dbReference type="RefSeq" id="NP_001258008.1">
    <molecule id="Q5M821-1"/>
    <property type="nucleotide sequence ID" value="NM_001271079.2"/>
</dbReference>
<dbReference type="SMR" id="Q5M821"/>
<dbReference type="FunCoup" id="Q5M821">
    <property type="interactions" value="2333"/>
</dbReference>
<dbReference type="STRING" id="10116.ENSRNOP00000005798"/>
<dbReference type="GlyGen" id="Q5M821">
    <property type="glycosylation" value="2 sites"/>
</dbReference>
<dbReference type="iPTMnet" id="Q5M821"/>
<dbReference type="PhosphoSitePlus" id="Q5M821"/>
<dbReference type="PaxDb" id="10116-ENSRNOP00000005798"/>
<dbReference type="Ensembl" id="ENSRNOT00000005798.8">
    <molecule id="Q5M821-1"/>
    <property type="protein sequence ID" value="ENSRNOP00000005798.4"/>
    <property type="gene ID" value="ENSRNOG00000004314.8"/>
</dbReference>
<dbReference type="Ensembl" id="ENSRNOT00000066381.2">
    <molecule id="Q5M821-2"/>
    <property type="protein sequence ID" value="ENSRNOP00000061506.3"/>
    <property type="gene ID" value="ENSRNOG00000004314.8"/>
</dbReference>
<dbReference type="GeneID" id="314897"/>
<dbReference type="KEGG" id="rno:314897"/>
<dbReference type="AGR" id="RGD:1309528"/>
<dbReference type="CTD" id="57460"/>
<dbReference type="RGD" id="1309528">
    <property type="gene designation" value="Ppm1h"/>
</dbReference>
<dbReference type="eggNOG" id="KOG1323">
    <property type="taxonomic scope" value="Eukaryota"/>
</dbReference>
<dbReference type="GeneTree" id="ENSGT00940000160095"/>
<dbReference type="HOGENOM" id="CLU_029072_2_0_1"/>
<dbReference type="InParanoid" id="Q5M821"/>
<dbReference type="OMA" id="VMAGGSN"/>
<dbReference type="OrthoDB" id="60943at9989"/>
<dbReference type="PhylomeDB" id="Q5M821"/>
<dbReference type="TreeFam" id="TF314700"/>
<dbReference type="PRO" id="PR:Q5M821"/>
<dbReference type="Proteomes" id="UP000002494">
    <property type="component" value="Chromosome 7"/>
</dbReference>
<dbReference type="Bgee" id="ENSRNOG00000004314">
    <property type="expression patterns" value="Expressed in kidney and 20 other cell types or tissues"/>
</dbReference>
<dbReference type="ExpressionAtlas" id="Q5M821">
    <property type="expression patterns" value="baseline and differential"/>
</dbReference>
<dbReference type="GO" id="GO:0005737">
    <property type="term" value="C:cytoplasm"/>
    <property type="evidence" value="ECO:0000250"/>
    <property type="project" value="UniProtKB"/>
</dbReference>
<dbReference type="GO" id="GO:0098978">
    <property type="term" value="C:glutamatergic synapse"/>
    <property type="evidence" value="ECO:0000266"/>
    <property type="project" value="RGD"/>
</dbReference>
<dbReference type="GO" id="GO:0005739">
    <property type="term" value="C:mitochondrion"/>
    <property type="evidence" value="ECO:0000318"/>
    <property type="project" value="GO_Central"/>
</dbReference>
<dbReference type="GO" id="GO:0005654">
    <property type="term" value="C:nucleoplasm"/>
    <property type="evidence" value="ECO:0007669"/>
    <property type="project" value="Ensembl"/>
</dbReference>
<dbReference type="GO" id="GO:0005634">
    <property type="term" value="C:nucleus"/>
    <property type="evidence" value="ECO:0000250"/>
    <property type="project" value="UniProtKB"/>
</dbReference>
<dbReference type="GO" id="GO:0045202">
    <property type="term" value="C:synapse"/>
    <property type="evidence" value="ECO:0000266"/>
    <property type="project" value="RGD"/>
</dbReference>
<dbReference type="GO" id="GO:0004741">
    <property type="term" value="F:[pyruvate dehydrogenase (acetyl-transferring)]-phosphatase activity"/>
    <property type="evidence" value="ECO:0000318"/>
    <property type="project" value="GO_Central"/>
</dbReference>
<dbReference type="GO" id="GO:0042802">
    <property type="term" value="F:identical protein binding"/>
    <property type="evidence" value="ECO:0000266"/>
    <property type="project" value="RGD"/>
</dbReference>
<dbReference type="GO" id="GO:0004721">
    <property type="term" value="F:phosphoprotein phosphatase activity"/>
    <property type="evidence" value="ECO:0000250"/>
    <property type="project" value="UniProtKB"/>
</dbReference>
<dbReference type="GO" id="GO:0007165">
    <property type="term" value="P:signal transduction"/>
    <property type="evidence" value="ECO:0000318"/>
    <property type="project" value="GO_Central"/>
</dbReference>
<dbReference type="CDD" id="cd00143">
    <property type="entry name" value="PP2Cc"/>
    <property type="match status" value="1"/>
</dbReference>
<dbReference type="Gene3D" id="3.60.40.10">
    <property type="entry name" value="PPM-type phosphatase domain"/>
    <property type="match status" value="1"/>
</dbReference>
<dbReference type="InterPro" id="IPR015655">
    <property type="entry name" value="PP2C"/>
</dbReference>
<dbReference type="InterPro" id="IPR036457">
    <property type="entry name" value="PPM-type-like_dom_sf"/>
</dbReference>
<dbReference type="InterPro" id="IPR001932">
    <property type="entry name" value="PPM-type_phosphatase-like_dom"/>
</dbReference>
<dbReference type="PANTHER" id="PTHR13832:SF287">
    <property type="entry name" value="PROTEIN PHOSPHATASE 1H"/>
    <property type="match status" value="1"/>
</dbReference>
<dbReference type="PANTHER" id="PTHR13832">
    <property type="entry name" value="PROTEIN PHOSPHATASE 2C"/>
    <property type="match status" value="1"/>
</dbReference>
<dbReference type="Pfam" id="PF00481">
    <property type="entry name" value="PP2C"/>
    <property type="match status" value="2"/>
</dbReference>
<dbReference type="SMART" id="SM00332">
    <property type="entry name" value="PP2Cc"/>
    <property type="match status" value="1"/>
</dbReference>
<dbReference type="SUPFAM" id="SSF81606">
    <property type="entry name" value="PP2C-like"/>
    <property type="match status" value="1"/>
</dbReference>
<dbReference type="PROSITE" id="PS51746">
    <property type="entry name" value="PPM_2"/>
    <property type="match status" value="1"/>
</dbReference>
<comment type="function">
    <text evidence="2">Dephosphorylates CDKN1B at 'Thr-187', thus removing a signal for proteasomal degradation.</text>
</comment>
<comment type="catalytic activity">
    <reaction>
        <text>O-phospho-L-seryl-[protein] + H2O = L-seryl-[protein] + phosphate</text>
        <dbReference type="Rhea" id="RHEA:20629"/>
        <dbReference type="Rhea" id="RHEA-COMP:9863"/>
        <dbReference type="Rhea" id="RHEA-COMP:11604"/>
        <dbReference type="ChEBI" id="CHEBI:15377"/>
        <dbReference type="ChEBI" id="CHEBI:29999"/>
        <dbReference type="ChEBI" id="CHEBI:43474"/>
        <dbReference type="ChEBI" id="CHEBI:83421"/>
        <dbReference type="EC" id="3.1.3.16"/>
    </reaction>
</comment>
<comment type="catalytic activity">
    <reaction>
        <text>O-phospho-L-threonyl-[protein] + H2O = L-threonyl-[protein] + phosphate</text>
        <dbReference type="Rhea" id="RHEA:47004"/>
        <dbReference type="Rhea" id="RHEA-COMP:11060"/>
        <dbReference type="Rhea" id="RHEA-COMP:11605"/>
        <dbReference type="ChEBI" id="CHEBI:15377"/>
        <dbReference type="ChEBI" id="CHEBI:30013"/>
        <dbReference type="ChEBI" id="CHEBI:43474"/>
        <dbReference type="ChEBI" id="CHEBI:61977"/>
        <dbReference type="EC" id="3.1.3.16"/>
    </reaction>
</comment>
<comment type="subcellular location">
    <subcellularLocation>
        <location evidence="2">Nucleus</location>
    </subcellularLocation>
    <subcellularLocation>
        <location evidence="2">Cytoplasm</location>
    </subcellularLocation>
</comment>
<comment type="alternative products">
    <event type="alternative splicing"/>
    <isoform>
        <id>Q5M821-1</id>
        <name>1</name>
        <sequence type="displayed"/>
    </isoform>
    <isoform>
        <id>Q5M821-2</id>
        <name>2</name>
        <sequence type="described" ref="VSP_025123 VSP_025124"/>
    </isoform>
    <text>Named isoforms=2.</text>
</comment>
<comment type="similarity">
    <text evidence="6">Belongs to the PP2C family.</text>
</comment>
<comment type="sequence caution" evidence="6">
    <conflict type="erroneous initiation">
        <sequence resource="EMBL-CDS" id="AAH88307"/>
    </conflict>
</comment>
<protein>
    <recommendedName>
        <fullName>Protein phosphatase 1H</fullName>
        <ecNumber>3.1.3.16</ecNumber>
    </recommendedName>
</protein>
<accession>Q5M821</accession>
<organism>
    <name type="scientific">Rattus norvegicus</name>
    <name type="common">Rat</name>
    <dbReference type="NCBI Taxonomy" id="10116"/>
    <lineage>
        <taxon>Eukaryota</taxon>
        <taxon>Metazoa</taxon>
        <taxon>Chordata</taxon>
        <taxon>Craniata</taxon>
        <taxon>Vertebrata</taxon>
        <taxon>Euteleostomi</taxon>
        <taxon>Mammalia</taxon>
        <taxon>Eutheria</taxon>
        <taxon>Euarchontoglires</taxon>
        <taxon>Glires</taxon>
        <taxon>Rodentia</taxon>
        <taxon>Myomorpha</taxon>
        <taxon>Muroidea</taxon>
        <taxon>Muridae</taxon>
        <taxon>Murinae</taxon>
        <taxon>Rattus</taxon>
    </lineage>
</organism>
<keyword id="KW-0025">Alternative splicing</keyword>
<keyword id="KW-0963">Cytoplasm</keyword>
<keyword id="KW-0378">Hydrolase</keyword>
<keyword id="KW-0488">Methylation</keyword>
<keyword id="KW-0539">Nucleus</keyword>
<keyword id="KW-0597">Phosphoprotein</keyword>
<keyword id="KW-0904">Protein phosphatase</keyword>
<keyword id="KW-1185">Reference proteome</keyword>
<name>PPM1H_RAT</name>
<gene>
    <name type="primary">Ppm1h</name>
</gene>